<protein>
    <recommendedName>
        <fullName evidence="1">Acetate kinase</fullName>
        <ecNumber evidence="1">2.7.2.1</ecNumber>
    </recommendedName>
    <alternativeName>
        <fullName evidence="1">Acetokinase</fullName>
    </alternativeName>
</protein>
<organism>
    <name type="scientific">Mycobacterium sp. (strain KMS)</name>
    <dbReference type="NCBI Taxonomy" id="189918"/>
    <lineage>
        <taxon>Bacteria</taxon>
        <taxon>Bacillati</taxon>
        <taxon>Actinomycetota</taxon>
        <taxon>Actinomycetes</taxon>
        <taxon>Mycobacteriales</taxon>
        <taxon>Mycobacteriaceae</taxon>
        <taxon>Mycobacterium</taxon>
    </lineage>
</organism>
<reference key="1">
    <citation type="submission" date="2006-12" db="EMBL/GenBank/DDBJ databases">
        <title>Complete sequence of chromosome of Mycobacterium sp. KMS.</title>
        <authorList>
            <consortium name="US DOE Joint Genome Institute"/>
            <person name="Copeland A."/>
            <person name="Lucas S."/>
            <person name="Lapidus A."/>
            <person name="Barry K."/>
            <person name="Detter J.C."/>
            <person name="Glavina del Rio T."/>
            <person name="Hammon N."/>
            <person name="Israni S."/>
            <person name="Dalin E."/>
            <person name="Tice H."/>
            <person name="Pitluck S."/>
            <person name="Kiss H."/>
            <person name="Brettin T."/>
            <person name="Bruce D."/>
            <person name="Han C."/>
            <person name="Tapia R."/>
            <person name="Gilna P."/>
            <person name="Schmutz J."/>
            <person name="Larimer F."/>
            <person name="Land M."/>
            <person name="Hauser L."/>
            <person name="Kyrpides N."/>
            <person name="Mikhailova N."/>
            <person name="Miller C.D."/>
            <person name="Richardson P."/>
        </authorList>
    </citation>
    <scope>NUCLEOTIDE SEQUENCE [LARGE SCALE GENOMIC DNA]</scope>
    <source>
        <strain>KMS</strain>
    </source>
</reference>
<proteinExistence type="inferred from homology"/>
<comment type="function">
    <text evidence="1">Catalyzes the formation of acetyl phosphate from acetate and ATP. Can also catalyze the reverse reaction.</text>
</comment>
<comment type="catalytic activity">
    <reaction evidence="1">
        <text>acetate + ATP = acetyl phosphate + ADP</text>
        <dbReference type="Rhea" id="RHEA:11352"/>
        <dbReference type="ChEBI" id="CHEBI:22191"/>
        <dbReference type="ChEBI" id="CHEBI:30089"/>
        <dbReference type="ChEBI" id="CHEBI:30616"/>
        <dbReference type="ChEBI" id="CHEBI:456216"/>
        <dbReference type="EC" id="2.7.2.1"/>
    </reaction>
</comment>
<comment type="cofactor">
    <cofactor evidence="1">
        <name>Mg(2+)</name>
        <dbReference type="ChEBI" id="CHEBI:18420"/>
    </cofactor>
    <cofactor evidence="1">
        <name>Mn(2+)</name>
        <dbReference type="ChEBI" id="CHEBI:29035"/>
    </cofactor>
    <text evidence="1">Mg(2+). Can also accept Mn(2+).</text>
</comment>
<comment type="pathway">
    <text evidence="1">Metabolic intermediate biosynthesis; acetyl-CoA biosynthesis; acetyl-CoA from acetate: step 1/2.</text>
</comment>
<comment type="subunit">
    <text evidence="1">Homodimer.</text>
</comment>
<comment type="subcellular location">
    <subcellularLocation>
        <location evidence="1">Cytoplasm</location>
    </subcellularLocation>
</comment>
<comment type="similarity">
    <text evidence="1">Belongs to the acetokinase family.</text>
</comment>
<keyword id="KW-0067">ATP-binding</keyword>
<keyword id="KW-0963">Cytoplasm</keyword>
<keyword id="KW-0418">Kinase</keyword>
<keyword id="KW-0460">Magnesium</keyword>
<keyword id="KW-0479">Metal-binding</keyword>
<keyword id="KW-0547">Nucleotide-binding</keyword>
<keyword id="KW-0808">Transferase</keyword>
<feature type="chain" id="PRO_1000002243" description="Acetate kinase">
    <location>
        <begin position="1"/>
        <end position="399"/>
    </location>
</feature>
<feature type="active site" description="Proton donor/acceptor" evidence="1">
    <location>
        <position position="147"/>
    </location>
</feature>
<feature type="binding site" evidence="1">
    <location>
        <position position="9"/>
    </location>
    <ligand>
        <name>Mg(2+)</name>
        <dbReference type="ChEBI" id="CHEBI:18420"/>
    </ligand>
</feature>
<feature type="binding site" evidence="1">
    <location>
        <position position="16"/>
    </location>
    <ligand>
        <name>ATP</name>
        <dbReference type="ChEBI" id="CHEBI:30616"/>
    </ligand>
</feature>
<feature type="binding site" evidence="1">
    <location>
        <position position="90"/>
    </location>
    <ligand>
        <name>substrate</name>
    </ligand>
</feature>
<feature type="binding site" evidence="1">
    <location>
        <begin position="207"/>
        <end position="211"/>
    </location>
    <ligand>
        <name>ATP</name>
        <dbReference type="ChEBI" id="CHEBI:30616"/>
    </ligand>
</feature>
<feature type="binding site" evidence="1">
    <location>
        <begin position="281"/>
        <end position="283"/>
    </location>
    <ligand>
        <name>ATP</name>
        <dbReference type="ChEBI" id="CHEBI:30616"/>
    </ligand>
</feature>
<feature type="binding site" evidence="1">
    <location>
        <begin position="333"/>
        <end position="337"/>
    </location>
    <ligand>
        <name>ATP</name>
        <dbReference type="ChEBI" id="CHEBI:30616"/>
    </ligand>
</feature>
<feature type="binding site" evidence="1">
    <location>
        <position position="387"/>
    </location>
    <ligand>
        <name>Mg(2+)</name>
        <dbReference type="ChEBI" id="CHEBI:18420"/>
    </ligand>
</feature>
<feature type="site" description="Transition state stabilizer" evidence="1">
    <location>
        <position position="179"/>
    </location>
</feature>
<feature type="site" description="Transition state stabilizer" evidence="1">
    <location>
        <position position="240"/>
    </location>
</feature>
<dbReference type="EC" id="2.7.2.1" evidence="1"/>
<dbReference type="EMBL" id="CP000518">
    <property type="protein sequence ID" value="ABL89766.1"/>
    <property type="molecule type" value="Genomic_DNA"/>
</dbReference>
<dbReference type="SMR" id="A1UAA8"/>
<dbReference type="STRING" id="189918.Mkms_0550"/>
<dbReference type="KEGG" id="mkm:Mkms_0550"/>
<dbReference type="HOGENOM" id="CLU_020352_0_1_11"/>
<dbReference type="OrthoDB" id="9802453at2"/>
<dbReference type="UniPathway" id="UPA00340">
    <property type="reaction ID" value="UER00458"/>
</dbReference>
<dbReference type="GO" id="GO:0005737">
    <property type="term" value="C:cytoplasm"/>
    <property type="evidence" value="ECO:0007669"/>
    <property type="project" value="UniProtKB-SubCell"/>
</dbReference>
<dbReference type="GO" id="GO:0008776">
    <property type="term" value="F:acetate kinase activity"/>
    <property type="evidence" value="ECO:0007669"/>
    <property type="project" value="UniProtKB-UniRule"/>
</dbReference>
<dbReference type="GO" id="GO:0005524">
    <property type="term" value="F:ATP binding"/>
    <property type="evidence" value="ECO:0007669"/>
    <property type="project" value="UniProtKB-KW"/>
</dbReference>
<dbReference type="GO" id="GO:0000287">
    <property type="term" value="F:magnesium ion binding"/>
    <property type="evidence" value="ECO:0007669"/>
    <property type="project" value="UniProtKB-UniRule"/>
</dbReference>
<dbReference type="GO" id="GO:0006083">
    <property type="term" value="P:acetate metabolic process"/>
    <property type="evidence" value="ECO:0007669"/>
    <property type="project" value="TreeGrafter"/>
</dbReference>
<dbReference type="GO" id="GO:0006085">
    <property type="term" value="P:acetyl-CoA biosynthetic process"/>
    <property type="evidence" value="ECO:0007669"/>
    <property type="project" value="UniProtKB-UniRule"/>
</dbReference>
<dbReference type="CDD" id="cd24010">
    <property type="entry name" value="ASKHA_NBD_AcK_PK"/>
    <property type="match status" value="1"/>
</dbReference>
<dbReference type="Gene3D" id="3.30.420.40">
    <property type="match status" value="2"/>
</dbReference>
<dbReference type="HAMAP" id="MF_00020">
    <property type="entry name" value="Acetate_kinase"/>
    <property type="match status" value="1"/>
</dbReference>
<dbReference type="InterPro" id="IPR004372">
    <property type="entry name" value="Ac/propionate_kinase"/>
</dbReference>
<dbReference type="InterPro" id="IPR000890">
    <property type="entry name" value="Aliphatic_acid_kin_short-chain"/>
</dbReference>
<dbReference type="InterPro" id="IPR023865">
    <property type="entry name" value="Aliphatic_acid_kinase_CS"/>
</dbReference>
<dbReference type="InterPro" id="IPR043129">
    <property type="entry name" value="ATPase_NBD"/>
</dbReference>
<dbReference type="NCBIfam" id="TIGR00016">
    <property type="entry name" value="ackA"/>
    <property type="match status" value="1"/>
</dbReference>
<dbReference type="PANTHER" id="PTHR21060">
    <property type="entry name" value="ACETATE KINASE"/>
    <property type="match status" value="1"/>
</dbReference>
<dbReference type="PANTHER" id="PTHR21060:SF15">
    <property type="entry name" value="ACETATE KINASE-RELATED"/>
    <property type="match status" value="1"/>
</dbReference>
<dbReference type="Pfam" id="PF00871">
    <property type="entry name" value="Acetate_kinase"/>
    <property type="match status" value="1"/>
</dbReference>
<dbReference type="PIRSF" id="PIRSF000722">
    <property type="entry name" value="Acetate_prop_kin"/>
    <property type="match status" value="1"/>
</dbReference>
<dbReference type="PRINTS" id="PR00471">
    <property type="entry name" value="ACETATEKNASE"/>
</dbReference>
<dbReference type="SUPFAM" id="SSF53067">
    <property type="entry name" value="Actin-like ATPase domain"/>
    <property type="match status" value="2"/>
</dbReference>
<dbReference type="PROSITE" id="PS01075">
    <property type="entry name" value="ACETATE_KINASE_1"/>
    <property type="match status" value="1"/>
</dbReference>
<dbReference type="PROSITE" id="PS01076">
    <property type="entry name" value="ACETATE_KINASE_2"/>
    <property type="match status" value="1"/>
</dbReference>
<evidence type="ECO:0000255" key="1">
    <source>
        <dbReference type="HAMAP-Rule" id="MF_00020"/>
    </source>
</evidence>
<gene>
    <name evidence="1" type="primary">ackA</name>
    <name type="ordered locus">Mkms_0550</name>
</gene>
<accession>A1UAA8</accession>
<name>ACKA_MYCSK</name>
<sequence>MTRTVLVLNSGSSSLKFQLLEPDSGASLADGIVERIGEDSSSASLVCGEREVTHSERVPDHEAALRTAYGLFDEAGAELGSVGLVAVGHRVVHGGPDLYQPTLIDDALVDTLESLAPLAPLHNPPAVLGIRGARKAFPDLPHVAVFDTAYFHDLPVAAATYAIDRDLSEQWHIRRYGFHGTSHQYVSEQAALFLDVPLSSLSQIVLHLGNGASASAILGGRPIDTSMGLTPMEGLVMGTRSGDVDPGVLVYLWRTAGMSVDEIETMLNKRSGVRGLGGEIDFRVLHQRIESGDESDRENAQLAYDVYIHRLRKYIGAYLALLGSTDVIVFTAGVGENDAAVRRDALSGMGRLGIELDEHLNESPSHTARRISAETSPTTVLVIPTNEELAIARACVEVI</sequence>